<comment type="function">
    <text evidence="4 5 7 8 9 10">High-affinity transporter for the intake of thiamine (PubMed:10391222, PubMed:10542220, PubMed:21836059, PubMed:33008889, PubMed:35512554, PubMed:35724964). Mediates H(+)-dependent pyridoxine transport (PubMed:33008889, PubMed:35512554, PubMed:35724964).</text>
</comment>
<comment type="catalytic activity">
    <reaction evidence="4 5 8 9 10">
        <text>thiamine(out) + H(+)(in) = thiamine(in) + H(+)(out)</text>
        <dbReference type="Rhea" id="RHEA:71271"/>
        <dbReference type="ChEBI" id="CHEBI:15378"/>
        <dbReference type="ChEBI" id="CHEBI:18385"/>
    </reaction>
</comment>
<comment type="catalytic activity">
    <reaction evidence="8 9 10">
        <text>pyridoxine(out) + n H(+)(out) = pyridoxine(in) + n H(+)(in)</text>
        <dbReference type="Rhea" id="RHEA:76203"/>
        <dbReference type="ChEBI" id="CHEBI:15378"/>
        <dbReference type="ChEBI" id="CHEBI:16709"/>
    </reaction>
</comment>
<comment type="activity regulation">
    <text evidence="8">Pyridoxine transport is inhibited by carbonyl cyanide p-trifluoromethoxyphenylhydrazone (FCCP) and carbonyl cyanide m-chlorophenylhydrazone (CCCP).</text>
</comment>
<comment type="biophysicochemical properties">
    <kinetics>
        <KM evidence="8">37.8 uM for pyridoxine (at pH 5.5)</KM>
        <KM evidence="8">3.66 uM for thiamine (at pH 5.5)</KM>
        <KM evidence="8">2.83 uM for thiamine (at pH 7.4)</KM>
        <KM evidence="5">2.5 uM for thiamine</KM>
        <Vmax evidence="8">332.0 pmol/min/mg enzyme for pyridoxine (at pH 5.5)</Vmax>
        <Vmax evidence="8">100.0 pmol/min/mg enzyme for thiamine (at pH 5.5)</Vmax>
        <Vmax evidence="8">106.0 pmol/min/mg enzyme for thiamine (at pH 7.4)</Vmax>
    </kinetics>
    <phDependence>
        <text evidence="5">Optimum pH is 8-8.5.</text>
    </phDependence>
</comment>
<comment type="subunit">
    <text evidence="1 7">Interacts with TSPAN1; this interaction increases the stability of SLC19A2 (PubMed:21836059). Interacts with TMEM63B (By similarity).</text>
</comment>
<comment type="interaction">
    <interactant intactId="EBI-3941998">
        <id>O60779</id>
    </interactant>
    <interactant intactId="EBI-3914312">
        <id>O60635</id>
        <label>TSPAN1</label>
    </interactant>
    <organismsDiffer>false</organismsDiffer>
    <experiments>5</experiments>
</comment>
<comment type="subcellular location">
    <subcellularLocation>
        <location evidence="7 13 14">Cell membrane</location>
        <topology evidence="2">Multi-pass membrane protein</topology>
    </subcellularLocation>
</comment>
<comment type="alternative products">
    <event type="alternative splicing"/>
    <isoform>
        <id>O60779-1</id>
        <name>1</name>
        <sequence type="displayed"/>
    </isoform>
    <isoform>
        <id>O60779-2</id>
        <name>2</name>
        <sequence type="described" ref="VSP_036467"/>
    </isoform>
</comment>
<comment type="tissue specificity">
    <text evidence="4 5">Ubiquitous; most abundant in skeletal and cardiac muscle. Medium expression in placenta, heart, liver and kidney, low in lung.</text>
</comment>
<comment type="disease" evidence="3 4 6">
    <disease id="DI-02365">
        <name>Thiamine-responsive megaloblastic anemia syndrome</name>
        <acronym>TRMA</acronym>
        <description>An autosomal recessive disease characterized by megaloblastic anemia, diabetes mellitus, and sensorineural deafness. Onset is typically between infancy and adolescence, but all of the cardinal findings are often not present initially. The anemia, and sometimes the diabetes, improves with high doses of thiamine. Other more variable features include optic atrophy, congenital heart defects, short stature, and stroke.</description>
        <dbReference type="MIM" id="249270"/>
    </disease>
    <text>The disease is caused by variants affecting the gene represented in this entry.</text>
</comment>
<comment type="similarity">
    <text evidence="12">Belongs to the reduced folate carrier (RFC) transporter (TC 2.A.48) family.</text>
</comment>
<comment type="sequence caution" evidence="12">
    <conflict type="frameshift">
        <sequence resource="EMBL-CDS" id="AAD51280"/>
    </conflict>
</comment>
<comment type="sequence caution" evidence="12">
    <conflict type="frameshift">
        <sequence resource="EMBL-CDS" id="AAD51283"/>
    </conflict>
</comment>
<comment type="sequence caution" evidence="12">
    <conflict type="erroneous initiation">
        <sequence resource="EMBL-CDS" id="BAG64936"/>
    </conflict>
    <text>Truncated N-terminus.</text>
</comment>
<keyword id="KW-0002">3D-structure</keyword>
<keyword id="KW-0007">Acetylation</keyword>
<keyword id="KW-0025">Alternative splicing</keyword>
<keyword id="KW-1003">Cell membrane</keyword>
<keyword id="KW-0209">Deafness</keyword>
<keyword id="KW-0219">Diabetes mellitus</keyword>
<keyword id="KW-0225">Disease variant</keyword>
<keyword id="KW-0325">Glycoprotein</keyword>
<keyword id="KW-0472">Membrane</keyword>
<keyword id="KW-0597">Phosphoprotein</keyword>
<keyword id="KW-1267">Proteomics identification</keyword>
<keyword id="KW-1185">Reference proteome</keyword>
<keyword id="KW-0812">Transmembrane</keyword>
<keyword id="KW-1133">Transmembrane helix</keyword>
<keyword id="KW-0813">Transport</keyword>
<reference key="1">
    <citation type="journal article" date="1999" name="J. Biol. Chem.">
        <title>Cloning of the human thiamine transporter, a member of the folate transporter family.</title>
        <authorList>
            <person name="Dutta B."/>
            <person name="Huang W."/>
            <person name="Molero M."/>
            <person name="Kekuda R."/>
            <person name="Leibach F.H."/>
            <person name="Devoe L.D."/>
            <person name="Ganapathy V."/>
            <person name="Prasad P.D."/>
        </authorList>
    </citation>
    <scope>NUCLEOTIDE SEQUENCE [MRNA] (ISOFORM 1)</scope>
    <scope>FUNCTION</scope>
    <scope>TISSUE SPECIFICITY</scope>
    <scope>TRANSPORTER ACTIVITY</scope>
    <scope>BIOPHYSICOCHEMICAL PROPERTIES</scope>
    <source>
        <tissue>Placenta</tissue>
    </source>
</reference>
<reference key="2">
    <citation type="journal article" date="1999" name="Nat. Genet.">
        <title>Mutations in SLC19A2 cause thiamine-responsive megaloblastic anaemia associated with diabetes mellitus and deafness.</title>
        <authorList>
            <person name="Labay V."/>
            <person name="Raz T."/>
            <person name="Baron D."/>
            <person name="Mandel H."/>
            <person name="Williams H."/>
            <person name="Barrett T."/>
            <person name="Szargel R."/>
            <person name="McDonald L."/>
            <person name="Shalata A."/>
            <person name="Nosaka K."/>
            <person name="Gregory S."/>
            <person name="Cohen N."/>
        </authorList>
    </citation>
    <scope>NUCLEOTIDE SEQUENCE [GENOMIC DNA / MRNA] (ISOFORM 1)</scope>
    <scope>VARIANT TRMA ASP-172</scope>
</reference>
<reference key="3">
    <citation type="journal article" date="1999" name="Nat. Genet.">
        <title>The gene mutated in thiamine-responsive anaemia with diabetes and deafness (TRMA) encodes a functional thiamine transporter.</title>
        <authorList>
            <person name="Fleming J.C."/>
            <person name="Tartaglini E."/>
            <person name="Steinkamp M.P."/>
            <person name="Schorderet D.F."/>
            <person name="Cohen N."/>
            <person name="Neufeld E.J."/>
        </authorList>
    </citation>
    <scope>NUCLEOTIDE SEQUENCE [GENOMIC DNA / MRNA] (ISOFORM 1)</scope>
    <scope>FUNCTION</scope>
    <scope>TISSUE SPECIFICITY</scope>
    <scope>TRANSPORTER ACTIVITY</scope>
    <scope>INVOLVEMENT IN TRMA</scope>
    <source>
        <tissue>Skeletal muscle</tissue>
    </source>
</reference>
<reference key="4">
    <citation type="journal article" date="1999" name="Nat. Genet.">
        <title>Mutations in a new gene encoding a thiamine transporter cause thiamine-responsive megaloblastic anaemia syndrome.</title>
        <authorList>
            <person name="Diaz G.A."/>
            <person name="Banikazemi M."/>
            <person name="Oishi K."/>
            <person name="Desnick R.J."/>
            <person name="Gelb B.D."/>
        </authorList>
    </citation>
    <scope>NUCLEOTIDE SEQUENCE [MRNA] (ISOFORM 1)</scope>
    <source>
        <tissue>Fetal brain</tissue>
    </source>
</reference>
<reference key="5">
    <citation type="submission" date="2000-05" db="EMBL/GenBank/DDBJ databases">
        <authorList>
            <person name="Subramanian V.S."/>
            <person name="Chatterjee N.S."/>
            <person name="Fleming J.C."/>
            <person name="Neufeld E.J."/>
            <person name="Said H.M."/>
        </authorList>
    </citation>
    <scope>NUCLEOTIDE SEQUENCE [MRNA] (ISOFORM 1)</scope>
    <source>
        <tissue>Colon</tissue>
    </source>
</reference>
<reference key="6">
    <citation type="journal article" date="2004" name="Nat. Genet.">
        <title>Complete sequencing and characterization of 21,243 full-length human cDNAs.</title>
        <authorList>
            <person name="Ota T."/>
            <person name="Suzuki Y."/>
            <person name="Nishikawa T."/>
            <person name="Otsuki T."/>
            <person name="Sugiyama T."/>
            <person name="Irie R."/>
            <person name="Wakamatsu A."/>
            <person name="Hayashi K."/>
            <person name="Sato H."/>
            <person name="Nagai K."/>
            <person name="Kimura K."/>
            <person name="Makita H."/>
            <person name="Sekine M."/>
            <person name="Obayashi M."/>
            <person name="Nishi T."/>
            <person name="Shibahara T."/>
            <person name="Tanaka T."/>
            <person name="Ishii S."/>
            <person name="Yamamoto J."/>
            <person name="Saito K."/>
            <person name="Kawai Y."/>
            <person name="Isono Y."/>
            <person name="Nakamura Y."/>
            <person name="Nagahari K."/>
            <person name="Murakami K."/>
            <person name="Yasuda T."/>
            <person name="Iwayanagi T."/>
            <person name="Wagatsuma M."/>
            <person name="Shiratori A."/>
            <person name="Sudo H."/>
            <person name="Hosoiri T."/>
            <person name="Kaku Y."/>
            <person name="Kodaira H."/>
            <person name="Kondo H."/>
            <person name="Sugawara M."/>
            <person name="Takahashi M."/>
            <person name="Kanda K."/>
            <person name="Yokoi T."/>
            <person name="Furuya T."/>
            <person name="Kikkawa E."/>
            <person name="Omura Y."/>
            <person name="Abe K."/>
            <person name="Kamihara K."/>
            <person name="Katsuta N."/>
            <person name="Sato K."/>
            <person name="Tanikawa M."/>
            <person name="Yamazaki M."/>
            <person name="Ninomiya K."/>
            <person name="Ishibashi T."/>
            <person name="Yamashita H."/>
            <person name="Murakawa K."/>
            <person name="Fujimori K."/>
            <person name="Tanai H."/>
            <person name="Kimata M."/>
            <person name="Watanabe M."/>
            <person name="Hiraoka S."/>
            <person name="Chiba Y."/>
            <person name="Ishida S."/>
            <person name="Ono Y."/>
            <person name="Takiguchi S."/>
            <person name="Watanabe S."/>
            <person name="Yosida M."/>
            <person name="Hotuta T."/>
            <person name="Kusano J."/>
            <person name="Kanehori K."/>
            <person name="Takahashi-Fujii A."/>
            <person name="Hara H."/>
            <person name="Tanase T.-O."/>
            <person name="Nomura Y."/>
            <person name="Togiya S."/>
            <person name="Komai F."/>
            <person name="Hara R."/>
            <person name="Takeuchi K."/>
            <person name="Arita M."/>
            <person name="Imose N."/>
            <person name="Musashino K."/>
            <person name="Yuuki H."/>
            <person name="Oshima A."/>
            <person name="Sasaki N."/>
            <person name="Aotsuka S."/>
            <person name="Yoshikawa Y."/>
            <person name="Matsunawa H."/>
            <person name="Ichihara T."/>
            <person name="Shiohata N."/>
            <person name="Sano S."/>
            <person name="Moriya S."/>
            <person name="Momiyama H."/>
            <person name="Satoh N."/>
            <person name="Takami S."/>
            <person name="Terashima Y."/>
            <person name="Suzuki O."/>
            <person name="Nakagawa S."/>
            <person name="Senoh A."/>
            <person name="Mizoguchi H."/>
            <person name="Goto Y."/>
            <person name="Shimizu F."/>
            <person name="Wakebe H."/>
            <person name="Hishigaki H."/>
            <person name="Watanabe T."/>
            <person name="Sugiyama A."/>
            <person name="Takemoto M."/>
            <person name="Kawakami B."/>
            <person name="Yamazaki M."/>
            <person name="Watanabe K."/>
            <person name="Kumagai A."/>
            <person name="Itakura S."/>
            <person name="Fukuzumi Y."/>
            <person name="Fujimori Y."/>
            <person name="Komiyama M."/>
            <person name="Tashiro H."/>
            <person name="Tanigami A."/>
            <person name="Fujiwara T."/>
            <person name="Ono T."/>
            <person name="Yamada K."/>
            <person name="Fujii Y."/>
            <person name="Ozaki K."/>
            <person name="Hirao M."/>
            <person name="Ohmori Y."/>
            <person name="Kawabata A."/>
            <person name="Hikiji T."/>
            <person name="Kobatake N."/>
            <person name="Inagaki H."/>
            <person name="Ikema Y."/>
            <person name="Okamoto S."/>
            <person name="Okitani R."/>
            <person name="Kawakami T."/>
            <person name="Noguchi S."/>
            <person name="Itoh T."/>
            <person name="Shigeta K."/>
            <person name="Senba T."/>
            <person name="Matsumura K."/>
            <person name="Nakajima Y."/>
            <person name="Mizuno T."/>
            <person name="Morinaga M."/>
            <person name="Sasaki M."/>
            <person name="Togashi T."/>
            <person name="Oyama M."/>
            <person name="Hata H."/>
            <person name="Watanabe M."/>
            <person name="Komatsu T."/>
            <person name="Mizushima-Sugano J."/>
            <person name="Satoh T."/>
            <person name="Shirai Y."/>
            <person name="Takahashi Y."/>
            <person name="Nakagawa K."/>
            <person name="Okumura K."/>
            <person name="Nagase T."/>
            <person name="Nomura N."/>
            <person name="Kikuchi H."/>
            <person name="Masuho Y."/>
            <person name="Yamashita R."/>
            <person name="Nakai K."/>
            <person name="Yada T."/>
            <person name="Nakamura Y."/>
            <person name="Ohara O."/>
            <person name="Isogai T."/>
            <person name="Sugano S."/>
        </authorList>
    </citation>
    <scope>NUCLEOTIDE SEQUENCE [LARGE SCALE MRNA] (ISOFORM 1)</scope>
    <source>
        <tissue>Colon</tissue>
        <tissue>Testis</tissue>
        <tissue>Trachea</tissue>
    </source>
</reference>
<reference key="7">
    <citation type="journal article" date="2006" name="Nature">
        <title>The DNA sequence and biological annotation of human chromosome 1.</title>
        <authorList>
            <person name="Gregory S.G."/>
            <person name="Barlow K.F."/>
            <person name="McLay K.E."/>
            <person name="Kaul R."/>
            <person name="Swarbreck D."/>
            <person name="Dunham A."/>
            <person name="Scott C.E."/>
            <person name="Howe K.L."/>
            <person name="Woodfine K."/>
            <person name="Spencer C.C.A."/>
            <person name="Jones M.C."/>
            <person name="Gillson C."/>
            <person name="Searle S."/>
            <person name="Zhou Y."/>
            <person name="Kokocinski F."/>
            <person name="McDonald L."/>
            <person name="Evans R."/>
            <person name="Phillips K."/>
            <person name="Atkinson A."/>
            <person name="Cooper R."/>
            <person name="Jones C."/>
            <person name="Hall R.E."/>
            <person name="Andrews T.D."/>
            <person name="Lloyd C."/>
            <person name="Ainscough R."/>
            <person name="Almeida J.P."/>
            <person name="Ambrose K.D."/>
            <person name="Anderson F."/>
            <person name="Andrew R.W."/>
            <person name="Ashwell R.I.S."/>
            <person name="Aubin K."/>
            <person name="Babbage A.K."/>
            <person name="Bagguley C.L."/>
            <person name="Bailey J."/>
            <person name="Beasley H."/>
            <person name="Bethel G."/>
            <person name="Bird C.P."/>
            <person name="Bray-Allen S."/>
            <person name="Brown J.Y."/>
            <person name="Brown A.J."/>
            <person name="Buckley D."/>
            <person name="Burton J."/>
            <person name="Bye J."/>
            <person name="Carder C."/>
            <person name="Chapman J.C."/>
            <person name="Clark S.Y."/>
            <person name="Clarke G."/>
            <person name="Clee C."/>
            <person name="Cobley V."/>
            <person name="Collier R.E."/>
            <person name="Corby N."/>
            <person name="Coville G.J."/>
            <person name="Davies J."/>
            <person name="Deadman R."/>
            <person name="Dunn M."/>
            <person name="Earthrowl M."/>
            <person name="Ellington A.G."/>
            <person name="Errington H."/>
            <person name="Frankish A."/>
            <person name="Frankland J."/>
            <person name="French L."/>
            <person name="Garner P."/>
            <person name="Garnett J."/>
            <person name="Gay L."/>
            <person name="Ghori M.R.J."/>
            <person name="Gibson R."/>
            <person name="Gilby L.M."/>
            <person name="Gillett W."/>
            <person name="Glithero R.J."/>
            <person name="Grafham D.V."/>
            <person name="Griffiths C."/>
            <person name="Griffiths-Jones S."/>
            <person name="Grocock R."/>
            <person name="Hammond S."/>
            <person name="Harrison E.S.I."/>
            <person name="Hart E."/>
            <person name="Haugen E."/>
            <person name="Heath P.D."/>
            <person name="Holmes S."/>
            <person name="Holt K."/>
            <person name="Howden P.J."/>
            <person name="Hunt A.R."/>
            <person name="Hunt S.E."/>
            <person name="Hunter G."/>
            <person name="Isherwood J."/>
            <person name="James R."/>
            <person name="Johnson C."/>
            <person name="Johnson D."/>
            <person name="Joy A."/>
            <person name="Kay M."/>
            <person name="Kershaw J.K."/>
            <person name="Kibukawa M."/>
            <person name="Kimberley A.M."/>
            <person name="King A."/>
            <person name="Knights A.J."/>
            <person name="Lad H."/>
            <person name="Laird G."/>
            <person name="Lawlor S."/>
            <person name="Leongamornlert D.A."/>
            <person name="Lloyd D.M."/>
            <person name="Loveland J."/>
            <person name="Lovell J."/>
            <person name="Lush M.J."/>
            <person name="Lyne R."/>
            <person name="Martin S."/>
            <person name="Mashreghi-Mohammadi M."/>
            <person name="Matthews L."/>
            <person name="Matthews N.S.W."/>
            <person name="McLaren S."/>
            <person name="Milne S."/>
            <person name="Mistry S."/>
            <person name="Moore M.J.F."/>
            <person name="Nickerson T."/>
            <person name="O'Dell C.N."/>
            <person name="Oliver K."/>
            <person name="Palmeiri A."/>
            <person name="Palmer S.A."/>
            <person name="Parker A."/>
            <person name="Patel D."/>
            <person name="Pearce A.V."/>
            <person name="Peck A.I."/>
            <person name="Pelan S."/>
            <person name="Phelps K."/>
            <person name="Phillimore B.J."/>
            <person name="Plumb R."/>
            <person name="Rajan J."/>
            <person name="Raymond C."/>
            <person name="Rouse G."/>
            <person name="Saenphimmachak C."/>
            <person name="Sehra H.K."/>
            <person name="Sheridan E."/>
            <person name="Shownkeen R."/>
            <person name="Sims S."/>
            <person name="Skuce C.D."/>
            <person name="Smith M."/>
            <person name="Steward C."/>
            <person name="Subramanian S."/>
            <person name="Sycamore N."/>
            <person name="Tracey A."/>
            <person name="Tromans A."/>
            <person name="Van Helmond Z."/>
            <person name="Wall M."/>
            <person name="Wallis J.M."/>
            <person name="White S."/>
            <person name="Whitehead S.L."/>
            <person name="Wilkinson J.E."/>
            <person name="Willey D.L."/>
            <person name="Williams H."/>
            <person name="Wilming L."/>
            <person name="Wray P.W."/>
            <person name="Wu Z."/>
            <person name="Coulson A."/>
            <person name="Vaudin M."/>
            <person name="Sulston J.E."/>
            <person name="Durbin R.M."/>
            <person name="Hubbard T."/>
            <person name="Wooster R."/>
            <person name="Dunham I."/>
            <person name="Carter N.P."/>
            <person name="McVean G."/>
            <person name="Ross M.T."/>
            <person name="Harrow J."/>
            <person name="Olson M.V."/>
            <person name="Beck S."/>
            <person name="Rogers J."/>
            <person name="Bentley D.R."/>
        </authorList>
    </citation>
    <scope>NUCLEOTIDE SEQUENCE [LARGE SCALE GENOMIC DNA]</scope>
</reference>
<reference key="8">
    <citation type="submission" date="2005-07" db="EMBL/GenBank/DDBJ databases">
        <authorList>
            <person name="Mural R.J."/>
            <person name="Istrail S."/>
            <person name="Sutton G.G."/>
            <person name="Florea L."/>
            <person name="Halpern A.L."/>
            <person name="Mobarry C.M."/>
            <person name="Lippert R."/>
            <person name="Walenz B."/>
            <person name="Shatkay H."/>
            <person name="Dew I."/>
            <person name="Miller J.R."/>
            <person name="Flanigan M.J."/>
            <person name="Edwards N.J."/>
            <person name="Bolanos R."/>
            <person name="Fasulo D."/>
            <person name="Halldorsson B.V."/>
            <person name="Hannenhalli S."/>
            <person name="Turner R."/>
            <person name="Yooseph S."/>
            <person name="Lu F."/>
            <person name="Nusskern D.R."/>
            <person name="Shue B.C."/>
            <person name="Zheng X.H."/>
            <person name="Zhong F."/>
            <person name="Delcher A.L."/>
            <person name="Huson D.H."/>
            <person name="Kravitz S.A."/>
            <person name="Mouchard L."/>
            <person name="Reinert K."/>
            <person name="Remington K.A."/>
            <person name="Clark A.G."/>
            <person name="Waterman M.S."/>
            <person name="Eichler E.E."/>
            <person name="Adams M.D."/>
            <person name="Hunkapiller M.W."/>
            <person name="Myers E.W."/>
            <person name="Venter J.C."/>
        </authorList>
    </citation>
    <scope>NUCLEOTIDE SEQUENCE [LARGE SCALE GENOMIC DNA]</scope>
</reference>
<reference key="9">
    <citation type="journal article" date="2004" name="Genome Res.">
        <title>The status, quality, and expansion of the NIH full-length cDNA project: the Mammalian Gene Collection (MGC).</title>
        <authorList>
            <consortium name="The MGC Project Team"/>
        </authorList>
    </citation>
    <scope>NUCLEOTIDE SEQUENCE [LARGE SCALE MRNA] (ISOFORM 2)</scope>
    <source>
        <tissue>Eye</tissue>
    </source>
</reference>
<reference key="10">
    <citation type="journal article" date="2011" name="Am. J. Physiol.">
        <title>Tspan-1 interacts with the thiamine transporter-1 in human intestinal epithelial cells and modulates its stability.</title>
        <authorList>
            <person name="Nabokina S.M."/>
            <person name="Senthilkumar S.R."/>
            <person name="Said H.M."/>
        </authorList>
    </citation>
    <scope>FUNCTION</scope>
    <scope>INTERACTION WITH SLC19A2</scope>
    <scope>SUBCELLULAR LOCATION</scope>
</reference>
<reference key="11">
    <citation type="journal article" date="2012" name="Proc. Natl. Acad. Sci. U.S.A.">
        <title>N-terminal acetylome analyses and functional insights of the N-terminal acetyltransferase NatB.</title>
        <authorList>
            <person name="Van Damme P."/>
            <person name="Lasa M."/>
            <person name="Polevoda B."/>
            <person name="Gazquez C."/>
            <person name="Elosegui-Artola A."/>
            <person name="Kim D.S."/>
            <person name="De Juan-Pardo E."/>
            <person name="Demeyer K."/>
            <person name="Hole K."/>
            <person name="Larrea E."/>
            <person name="Timmerman E."/>
            <person name="Prieto J."/>
            <person name="Arnesen T."/>
            <person name="Sherman F."/>
            <person name="Gevaert K."/>
            <person name="Aldabe R."/>
        </authorList>
    </citation>
    <scope>ACETYLATION [LARGE SCALE ANALYSIS] AT MET-1</scope>
    <scope>IDENTIFICATION BY MASS SPECTROMETRY [LARGE SCALE ANALYSIS]</scope>
</reference>
<reference key="12">
    <citation type="journal article" date="2013" name="J. Proteome Res.">
        <title>Toward a comprehensive characterization of a human cancer cell phosphoproteome.</title>
        <authorList>
            <person name="Zhou H."/>
            <person name="Di Palma S."/>
            <person name="Preisinger C."/>
            <person name="Peng M."/>
            <person name="Polat A.N."/>
            <person name="Heck A.J."/>
            <person name="Mohammed S."/>
        </authorList>
    </citation>
    <scope>PHOSPHORYLATION [LARGE SCALE ANALYSIS] AT SER-222</scope>
    <scope>IDENTIFICATION BY MASS SPECTROMETRY [LARGE SCALE ANALYSIS]</scope>
    <source>
        <tissue>Erythroleukemia</tissue>
    </source>
</reference>
<reference key="13">
    <citation type="journal article" date="2020" name="J. Biol. Chem.">
        <title>pH-dependent pyridoxine transport by SLC19A2 and SLC19A3: Implications for absorption in acidic microclimates.</title>
        <authorList>
            <person name="Yamashiro T."/>
            <person name="Yasujima T."/>
            <person name="Said H.M."/>
            <person name="Yuasa H."/>
        </authorList>
    </citation>
    <scope>FUNCTION</scope>
    <scope>TRANSPORTER ACTIVITY</scope>
    <scope>BIOPHYSICOCHEMICAL PROPERTIES</scope>
    <scope>ACTIVITY REGULATION</scope>
</reference>
<reference key="14">
    <citation type="journal article" date="2022" name="Drug Metab. Pharmacokinet.">
        <title>Animal species differences in the pyridoxine transport function of SLC19A3: Absence of Slc19a3-mediated pyridoxine uptake in the rat small intestine.</title>
        <authorList>
            <person name="Yamashiro T."/>
            <person name="Yasujima T."/>
            <person name="Yuasa H."/>
        </authorList>
    </citation>
    <scope>FUNCTION</scope>
    <scope>TRANSPORTER ACTIVITY</scope>
</reference>
<reference key="15">
    <citation type="journal article" date="2022" name="J. Biol. Chem.">
        <title>Identification of the amino acid residues involved in the species-dependent differences in the pyridoxine transport function of SLC19A3.</title>
        <authorList>
            <person name="Miyake K."/>
            <person name="Yasujima T."/>
            <person name="Takahashi S."/>
            <person name="Yamashiro T."/>
            <person name="Yuasa H."/>
        </authorList>
    </citation>
    <scope>FUNCTION</scope>
    <scope>TRANSPORTER ACTIVITY</scope>
    <scope>MUTAGENESIS OF GLN-104; GLY-105; ILE-109; THR-111; TRP-112; SER-186 AND ASN-191</scope>
    <scope>SITE</scope>
</reference>
<reference key="16">
    <citation type="journal article" date="2000" name="Hum. Mutat.">
        <title>The spectrum of mutations, including four novel ones, in the thiamine-responsive megaloblastic anemia gene SLC19A2 of eight families.</title>
        <authorList>
            <person name="Raz T."/>
            <person name="Labay V."/>
            <person name="Baron D."/>
            <person name="Szargel R."/>
            <person name="Anbinder Y."/>
            <person name="Barrett T."/>
            <person name="Rabl W."/>
            <person name="Viana M.B."/>
            <person name="Mandel H."/>
            <person name="Baruchel A."/>
            <person name="Cayuela J.-M."/>
            <person name="Cohen N."/>
        </authorList>
    </citation>
    <scope>VARIANTS TRMA HIS-93 AND PHE-143</scope>
</reference>
<proteinExistence type="evidence at protein level"/>
<protein>
    <recommendedName>
        <fullName>Thiamine transporter 1</fullName>
        <shortName>ThTr-1</shortName>
        <shortName>ThTr1</shortName>
    </recommendedName>
    <alternativeName>
        <fullName>Solute carrier family 19 member 2</fullName>
    </alternativeName>
    <alternativeName>
        <fullName>Thiamine carrier 1</fullName>
        <shortName>TC1</shortName>
    </alternativeName>
</protein>
<name>S19A2_HUMAN</name>
<sequence>MDVPGPVSRRAAAAAATVLLRTARVRRECWFLPTALLCAYGFFASLRPSEPFLTPYLLGPDKNLTEREVFNEIYPVWTYSYLVLLFPVFLATDYLRYKPVVLLQGLSLIVTWFMLLYAQGLLAIQFLEFFYGIATATEIAYYSYIYSVVDLGMYQKVTSYCRSATLVGFTVGSVLGQILVSVAGWSLFSLNVISLTCVSVAFAVAWFLPMPQKSLFFHHIPSTCQRVNGIKVQNGGIVTDTPASNHLPGWEDIESKIPLNMEEPPVEEPEPKPDRLLVLKVLWNDFLMCYSSRPLLCWSVWWALSTCGYFQVVNYTQGLWEKVMPSRYAAIYNGGVEAVSTLLGAVAVFAVGYIKISWSTWGEMTLSLFSLLIAAAVYIMDTVGNIWVCYASYVVFRIIYMLLITIATFQIAANLSMERYALVFGVNTFIALALQTLLTLIVVDASGLGLEITTQFLIYASYFALIAVVFLASGAVSVMKKCRKLEDPQSSSQVTTS</sequence>
<gene>
    <name type="primary">SLC19A2</name>
    <name type="synonym">THT1</name>
    <name type="synonym">TRMA</name>
</gene>
<feature type="chain" id="PRO_0000178663" description="Thiamine transporter 1">
    <location>
        <begin position="1"/>
        <end position="497"/>
    </location>
</feature>
<feature type="topological domain" description="Cytoplasmic" evidence="2">
    <location>
        <begin position="1"/>
        <end position="28"/>
    </location>
</feature>
<feature type="transmembrane region" description="Helical" evidence="2">
    <location>
        <begin position="29"/>
        <end position="46"/>
    </location>
</feature>
<feature type="topological domain" description="Extracellular" evidence="2">
    <location>
        <begin position="47"/>
        <end position="72"/>
    </location>
</feature>
<feature type="transmembrane region" description="Helical" evidence="2">
    <location>
        <begin position="73"/>
        <end position="91"/>
    </location>
</feature>
<feature type="topological domain" description="Cytoplasmic" evidence="2">
    <location>
        <begin position="92"/>
        <end position="99"/>
    </location>
</feature>
<feature type="transmembrane region" description="Helical" evidence="2">
    <location>
        <begin position="100"/>
        <end position="118"/>
    </location>
</feature>
<feature type="topological domain" description="Extracellular" evidence="2">
    <location>
        <begin position="119"/>
        <end position="128"/>
    </location>
</feature>
<feature type="transmembrane region" description="Helical" evidence="2">
    <location>
        <begin position="129"/>
        <end position="149"/>
    </location>
</feature>
<feature type="topological domain" description="Cytoplasmic" evidence="2">
    <location>
        <begin position="150"/>
        <end position="165"/>
    </location>
</feature>
<feature type="transmembrane region" description="Helical" evidence="2">
    <location>
        <begin position="166"/>
        <end position="185"/>
    </location>
</feature>
<feature type="topological domain" description="Extracellular" evidence="2">
    <location>
        <begin position="186"/>
        <end position="191"/>
    </location>
</feature>
<feature type="transmembrane region" description="Helical" evidence="2">
    <location>
        <begin position="192"/>
        <end position="208"/>
    </location>
</feature>
<feature type="topological domain" description="Cytoplasmic" evidence="2">
    <location>
        <begin position="209"/>
        <end position="285"/>
    </location>
</feature>
<feature type="transmembrane region" description="Helical" evidence="2">
    <location>
        <begin position="286"/>
        <end position="310"/>
    </location>
</feature>
<feature type="topological domain" description="Extracellular" evidence="2">
    <location>
        <begin position="311"/>
        <end position="337"/>
    </location>
</feature>
<feature type="transmembrane region" description="Helical" evidence="2">
    <location>
        <begin position="338"/>
        <end position="354"/>
    </location>
</feature>
<feature type="topological domain" description="Cytoplasmic" evidence="2">
    <location>
        <begin position="355"/>
        <end position="363"/>
    </location>
</feature>
<feature type="transmembrane region" description="Helical" evidence="2">
    <location>
        <begin position="364"/>
        <end position="380"/>
    </location>
</feature>
<feature type="topological domain" description="Extracellular" evidence="2">
    <location>
        <begin position="381"/>
        <end position="386"/>
    </location>
</feature>
<feature type="transmembrane region" description="Helical" evidence="2">
    <location>
        <begin position="387"/>
        <end position="409"/>
    </location>
</feature>
<feature type="topological domain" description="Cytoplasmic" evidence="2">
    <location>
        <begin position="410"/>
        <end position="419"/>
    </location>
</feature>
<feature type="transmembrane region" description="Helical" evidence="2">
    <location>
        <begin position="420"/>
        <end position="443"/>
    </location>
</feature>
<feature type="topological domain" description="Extracellular" evidence="2">
    <location>
        <begin position="444"/>
        <end position="455"/>
    </location>
</feature>
<feature type="transmembrane region" description="Helical" evidence="2">
    <location>
        <begin position="456"/>
        <end position="479"/>
    </location>
</feature>
<feature type="topological domain" description="Cytoplasmic" evidence="2">
    <location>
        <begin position="480"/>
        <end position="497"/>
    </location>
</feature>
<feature type="site" description="Essential for pyridoxine transport" evidence="10">
    <location>
        <position position="104"/>
    </location>
</feature>
<feature type="site" description="Essential for pyridoxine transport" evidence="10">
    <location>
        <position position="105"/>
    </location>
</feature>
<feature type="site" description="Essential for pyridoxine transport" evidence="10">
    <location>
        <position position="109"/>
    </location>
</feature>
<feature type="site" description="Essential for pyridoxine transport" evidence="10">
    <location>
        <position position="111"/>
    </location>
</feature>
<feature type="site" description="Essential for pyridoxine transport" evidence="10">
    <location>
        <position position="112"/>
    </location>
</feature>
<feature type="site" description="Essential for pyridoxine transport" evidence="10">
    <location>
        <position position="186"/>
    </location>
</feature>
<feature type="site" description="Essential for pyridoxine transport" evidence="10">
    <location>
        <position position="191"/>
    </location>
</feature>
<feature type="modified residue" description="N-acetylmethionine" evidence="15">
    <location>
        <position position="1"/>
    </location>
</feature>
<feature type="modified residue" description="Phosphoserine" evidence="16">
    <location>
        <position position="222"/>
    </location>
</feature>
<feature type="glycosylation site" description="N-linked (GlcNAc...) asparagine" evidence="2">
    <location>
        <position position="63"/>
    </location>
</feature>
<feature type="glycosylation site" description="N-linked (GlcNAc...) asparagine" evidence="2">
    <location>
        <position position="314"/>
    </location>
</feature>
<feature type="splice variant" id="VSP_036467" description="In isoform 2." evidence="11">
    <location>
        <begin position="69"/>
        <end position="269"/>
    </location>
</feature>
<feature type="sequence variant" id="VAR_010249" description="In TRMA." evidence="6">
    <original>D</original>
    <variation>H</variation>
    <location>
        <position position="93"/>
    </location>
</feature>
<feature type="sequence variant" id="VAR_010250" description="In TRMA; dbSNP:rs761957186." evidence="6">
    <original>S</original>
    <variation>F</variation>
    <location>
        <position position="143"/>
    </location>
</feature>
<feature type="sequence variant" id="VAR_010248" description="In TRMA; dbSNP:rs28937595." evidence="3">
    <original>G</original>
    <variation>D</variation>
    <location>
        <position position="172"/>
    </location>
</feature>
<feature type="mutagenesis site" description="Loss of pyridoxine transport; when associated with V-105; A-109; S-111; Y-112; P-186 and F-191." evidence="10">
    <original>Q</original>
    <variation>H</variation>
    <location>
        <position position="104"/>
    </location>
</feature>
<feature type="mutagenesis site" description="Loss of pyridoxine transport; when associated with H-104; A-109; S-111; Y-112; P-186 and F-191." evidence="10">
    <original>G</original>
    <variation>V</variation>
    <location>
        <position position="105"/>
    </location>
</feature>
<feature type="mutagenesis site" description="Loss of pyridoxine transport; when associated with H-104; V-105; S-111; Y-112; P-186 and F-191." evidence="10">
    <original>I</original>
    <variation>A</variation>
    <location>
        <position position="109"/>
    </location>
</feature>
<feature type="mutagenesis site" description="Loss of pyridoxine transport; when associated with H-104; V-105; A-109; Y-112; P-186 and F-191." evidence="10">
    <original>T</original>
    <variation>S</variation>
    <location>
        <position position="111"/>
    </location>
</feature>
<feature type="mutagenesis site" description="Loss of pyridoxine transport; when associated with H-104; V-105; A-109; S-111; P-186 and F-191." evidence="10">
    <original>W</original>
    <variation>Y</variation>
    <location>
        <position position="112"/>
    </location>
</feature>
<feature type="mutagenesis site" description="Loss of pyridoxine transport; when associated with H-104; V-105; A-109; S-111; Y-112 and F-191." evidence="10">
    <original>S</original>
    <variation>P</variation>
    <location>
        <position position="186"/>
    </location>
</feature>
<feature type="mutagenesis site" description="Loss of pyridoxine transport; when associated with H-104; V-105; A-109; S-111; Y-112 and P-186." evidence="10">
    <original>N</original>
    <variation>F</variation>
    <location>
        <position position="191"/>
    </location>
</feature>
<evidence type="ECO:0000250" key="1">
    <source>
        <dbReference type="UniProtKB" id="Q9EQN9"/>
    </source>
</evidence>
<evidence type="ECO:0000255" key="2"/>
<evidence type="ECO:0000269" key="3">
    <source>
    </source>
</evidence>
<evidence type="ECO:0000269" key="4">
    <source>
    </source>
</evidence>
<evidence type="ECO:0000269" key="5">
    <source>
    </source>
</evidence>
<evidence type="ECO:0000269" key="6">
    <source>
    </source>
</evidence>
<evidence type="ECO:0000269" key="7">
    <source>
    </source>
</evidence>
<evidence type="ECO:0000269" key="8">
    <source>
    </source>
</evidence>
<evidence type="ECO:0000269" key="9">
    <source>
    </source>
</evidence>
<evidence type="ECO:0000269" key="10">
    <source>
    </source>
</evidence>
<evidence type="ECO:0000303" key="11">
    <source>
    </source>
</evidence>
<evidence type="ECO:0000305" key="12"/>
<evidence type="ECO:0000305" key="13">
    <source>
    </source>
</evidence>
<evidence type="ECO:0000305" key="14">
    <source>
    </source>
</evidence>
<evidence type="ECO:0007744" key="15">
    <source>
    </source>
</evidence>
<evidence type="ECO:0007744" key="16">
    <source>
    </source>
</evidence>
<dbReference type="EMBL" id="AF160812">
    <property type="protein sequence ID" value="AAF15129.1"/>
    <property type="molecule type" value="mRNA"/>
</dbReference>
<dbReference type="EMBL" id="AJ238413">
    <property type="protein sequence ID" value="CAB50771.1"/>
    <property type="molecule type" value="Genomic_DNA"/>
</dbReference>
<dbReference type="EMBL" id="AJ237724">
    <property type="protein sequence ID" value="CAB50770.1"/>
    <property type="molecule type" value="mRNA"/>
</dbReference>
<dbReference type="EMBL" id="AF135488">
    <property type="protein sequence ID" value="AAD45985.1"/>
    <property type="molecule type" value="mRNA"/>
</dbReference>
<dbReference type="EMBL" id="AF158233">
    <property type="protein sequence ID" value="AAD51280.1"/>
    <property type="status" value="ALT_FRAME"/>
    <property type="molecule type" value="Genomic_DNA"/>
</dbReference>
<dbReference type="EMBL" id="AF160186">
    <property type="protein sequence ID" value="AAD51283.1"/>
    <property type="status" value="ALT_FRAME"/>
    <property type="molecule type" value="Genomic_DNA"/>
</dbReference>
<dbReference type="EMBL" id="AF160756">
    <property type="protein sequence ID" value="AAD54242.1"/>
    <property type="molecule type" value="Genomic_DNA"/>
</dbReference>
<dbReference type="EMBL" id="AF153330">
    <property type="protein sequence ID" value="AAD43534.1"/>
    <property type="molecule type" value="mRNA"/>
</dbReference>
<dbReference type="EMBL" id="AF272359">
    <property type="protein sequence ID" value="AAK54468.1"/>
    <property type="molecule type" value="mRNA"/>
</dbReference>
<dbReference type="EMBL" id="AK304021">
    <property type="protein sequence ID" value="BAG64936.1"/>
    <property type="status" value="ALT_INIT"/>
    <property type="molecule type" value="mRNA"/>
</dbReference>
<dbReference type="EMBL" id="AK313779">
    <property type="protein sequence ID" value="BAG36517.1"/>
    <property type="molecule type" value="mRNA"/>
</dbReference>
<dbReference type="EMBL" id="AK316465">
    <property type="protein sequence ID" value="BAH14836.1"/>
    <property type="molecule type" value="mRNA"/>
</dbReference>
<dbReference type="EMBL" id="AL021068">
    <property type="status" value="NOT_ANNOTATED_CDS"/>
    <property type="molecule type" value="Genomic_DNA"/>
</dbReference>
<dbReference type="EMBL" id="CH471067">
    <property type="protein sequence ID" value="EAW90843.1"/>
    <property type="molecule type" value="Genomic_DNA"/>
</dbReference>
<dbReference type="EMBL" id="CH471067">
    <property type="protein sequence ID" value="EAW90846.1"/>
    <property type="molecule type" value="Genomic_DNA"/>
</dbReference>
<dbReference type="EMBL" id="BC018514">
    <property type="protein sequence ID" value="AAH18514.1"/>
    <property type="molecule type" value="mRNA"/>
</dbReference>
<dbReference type="CCDS" id="CCDS1280.1">
    <molecule id="O60779-1"/>
</dbReference>
<dbReference type="CCDS" id="CCDS81398.1">
    <molecule id="O60779-2"/>
</dbReference>
<dbReference type="RefSeq" id="NP_001306596.1">
    <molecule id="O60779-2"/>
    <property type="nucleotide sequence ID" value="NM_001319667.1"/>
</dbReference>
<dbReference type="RefSeq" id="NP_008927.1">
    <molecule id="O60779-1"/>
    <property type="nucleotide sequence ID" value="NM_006996.3"/>
</dbReference>
<dbReference type="PDB" id="8Z7Z">
    <property type="method" value="EM"/>
    <property type="resolution" value="3.23 A"/>
    <property type="chains" value="A=1-497"/>
</dbReference>
<dbReference type="PDB" id="8Z80">
    <property type="method" value="EM"/>
    <property type="resolution" value="3.70 A"/>
    <property type="chains" value="B=1-497"/>
</dbReference>
<dbReference type="PDBsum" id="8Z7Z"/>
<dbReference type="PDBsum" id="8Z80"/>
<dbReference type="EMDB" id="EMD-39833"/>
<dbReference type="EMDB" id="EMD-39834"/>
<dbReference type="SMR" id="O60779"/>
<dbReference type="BioGRID" id="115811">
    <property type="interactions" value="74"/>
</dbReference>
<dbReference type="FunCoup" id="O60779">
    <property type="interactions" value="1356"/>
</dbReference>
<dbReference type="IntAct" id="O60779">
    <property type="interactions" value="69"/>
</dbReference>
<dbReference type="MINT" id="O60779"/>
<dbReference type="STRING" id="9606.ENSP00000236137"/>
<dbReference type="BindingDB" id="O60779"/>
<dbReference type="ChEMBL" id="CHEMBL3079"/>
<dbReference type="DrugBank" id="DB00152">
    <property type="generic name" value="Thiamine"/>
</dbReference>
<dbReference type="DrugCentral" id="O60779"/>
<dbReference type="TCDB" id="2.A.48.1.2">
    <property type="family name" value="the reduced folate carrier (rfc) family"/>
</dbReference>
<dbReference type="GlyCosmos" id="O60779">
    <property type="glycosylation" value="2 sites, No reported glycans"/>
</dbReference>
<dbReference type="GlyGen" id="O60779">
    <property type="glycosylation" value="2 sites"/>
</dbReference>
<dbReference type="iPTMnet" id="O60779"/>
<dbReference type="PhosphoSitePlus" id="O60779"/>
<dbReference type="SwissPalm" id="O60779"/>
<dbReference type="BioMuta" id="SLC19A2"/>
<dbReference type="jPOST" id="O60779"/>
<dbReference type="MassIVE" id="O60779"/>
<dbReference type="PaxDb" id="9606-ENSP00000236137"/>
<dbReference type="PeptideAtlas" id="O60779"/>
<dbReference type="ProteomicsDB" id="49594">
    <molecule id="O60779-1"/>
</dbReference>
<dbReference type="ProteomicsDB" id="49595">
    <molecule id="O60779-2"/>
</dbReference>
<dbReference type="Pumba" id="O60779"/>
<dbReference type="Antibodypedia" id="1655">
    <property type="antibodies" value="95 antibodies from 20 providers"/>
</dbReference>
<dbReference type="DNASU" id="10560"/>
<dbReference type="Ensembl" id="ENST00000236137.10">
    <molecule id="O60779-1"/>
    <property type="protein sequence ID" value="ENSP00000236137.5"/>
    <property type="gene ID" value="ENSG00000117479.15"/>
</dbReference>
<dbReference type="Ensembl" id="ENST00000367804.4">
    <molecule id="O60779-2"/>
    <property type="protein sequence ID" value="ENSP00000356778.3"/>
    <property type="gene ID" value="ENSG00000117479.15"/>
</dbReference>
<dbReference type="GeneID" id="10560"/>
<dbReference type="KEGG" id="hsa:10560"/>
<dbReference type="MANE-Select" id="ENST00000236137.10">
    <property type="protein sequence ID" value="ENSP00000236137.5"/>
    <property type="RefSeq nucleotide sequence ID" value="NM_006996.3"/>
    <property type="RefSeq protein sequence ID" value="NP_008927.1"/>
</dbReference>
<dbReference type="UCSC" id="uc001gge.5">
    <molecule id="O60779-1"/>
    <property type="organism name" value="human"/>
</dbReference>
<dbReference type="AGR" id="HGNC:10938"/>
<dbReference type="CTD" id="10560"/>
<dbReference type="DisGeNET" id="10560"/>
<dbReference type="GeneCards" id="SLC19A2"/>
<dbReference type="GeneReviews" id="SLC19A2"/>
<dbReference type="HGNC" id="HGNC:10938">
    <property type="gene designation" value="SLC19A2"/>
</dbReference>
<dbReference type="HPA" id="ENSG00000117479">
    <property type="expression patterns" value="Tissue enhanced (skeletal muscle, tongue)"/>
</dbReference>
<dbReference type="MalaCards" id="SLC19A2"/>
<dbReference type="MIM" id="249270">
    <property type="type" value="phenotype"/>
</dbReference>
<dbReference type="MIM" id="603941">
    <property type="type" value="gene"/>
</dbReference>
<dbReference type="neXtProt" id="NX_O60779"/>
<dbReference type="OpenTargets" id="ENSG00000117479"/>
<dbReference type="Orphanet" id="49827">
    <property type="disease" value="Thiamine-responsive megaloblastic anemia syndrome"/>
</dbReference>
<dbReference type="PharmGKB" id="PA35825"/>
<dbReference type="VEuPathDB" id="HostDB:ENSG00000117479"/>
<dbReference type="eggNOG" id="KOG3810">
    <property type="taxonomic scope" value="Eukaryota"/>
</dbReference>
<dbReference type="GeneTree" id="ENSGT00950000183022"/>
<dbReference type="HOGENOM" id="CLU_036909_0_1_1"/>
<dbReference type="InParanoid" id="O60779"/>
<dbReference type="OMA" id="CYRCRPL"/>
<dbReference type="OrthoDB" id="18814at2759"/>
<dbReference type="PAN-GO" id="O60779">
    <property type="GO annotations" value="4 GO annotations based on evolutionary models"/>
</dbReference>
<dbReference type="PhylomeDB" id="O60779"/>
<dbReference type="TreeFam" id="TF313684"/>
<dbReference type="PathwayCommons" id="O60779"/>
<dbReference type="Reactome" id="R-HSA-196819">
    <property type="pathway name" value="Vitamin B1 (thiamin) metabolism"/>
</dbReference>
<dbReference type="SABIO-RK" id="O60779"/>
<dbReference type="SignaLink" id="O60779"/>
<dbReference type="BioGRID-ORCS" id="10560">
    <property type="hits" value="27 hits in 1164 CRISPR screens"/>
</dbReference>
<dbReference type="ChiTaRS" id="SLC19A2">
    <property type="organism name" value="human"/>
</dbReference>
<dbReference type="GeneWiki" id="SLC19A2"/>
<dbReference type="GenomeRNAi" id="10560"/>
<dbReference type="Pharos" id="O60779">
    <property type="development level" value="Tbio"/>
</dbReference>
<dbReference type="PRO" id="PR:O60779"/>
<dbReference type="Proteomes" id="UP000005640">
    <property type="component" value="Chromosome 1"/>
</dbReference>
<dbReference type="RNAct" id="O60779">
    <property type="molecule type" value="protein"/>
</dbReference>
<dbReference type="Bgee" id="ENSG00000117479">
    <property type="expression patterns" value="Expressed in secondary oocyte and 193 other cell types or tissues"/>
</dbReference>
<dbReference type="ExpressionAtlas" id="O60779">
    <property type="expression patterns" value="baseline and differential"/>
</dbReference>
<dbReference type="GO" id="GO:0016020">
    <property type="term" value="C:membrane"/>
    <property type="evidence" value="ECO:0000303"/>
    <property type="project" value="UniProtKB"/>
</dbReference>
<dbReference type="GO" id="GO:0005886">
    <property type="term" value="C:plasma membrane"/>
    <property type="evidence" value="ECO:0000314"/>
    <property type="project" value="UniProtKB"/>
</dbReference>
<dbReference type="GO" id="GO:0008517">
    <property type="term" value="F:folic acid transmembrane transporter activity"/>
    <property type="evidence" value="ECO:0000303"/>
    <property type="project" value="UniProtKB"/>
</dbReference>
<dbReference type="GO" id="GO:0015234">
    <property type="term" value="F:thiamine transmembrane transporter activity"/>
    <property type="evidence" value="ECO:0000314"/>
    <property type="project" value="UniProtKB"/>
</dbReference>
<dbReference type="GO" id="GO:0031923">
    <property type="term" value="P:pyridoxine transport"/>
    <property type="evidence" value="ECO:0000314"/>
    <property type="project" value="UniProtKB"/>
</dbReference>
<dbReference type="GO" id="GO:0007283">
    <property type="term" value="P:spermatogenesis"/>
    <property type="evidence" value="ECO:0007669"/>
    <property type="project" value="Ensembl"/>
</dbReference>
<dbReference type="GO" id="GO:0009229">
    <property type="term" value="P:thiamine diphosphate biosynthetic process"/>
    <property type="evidence" value="ECO:0007669"/>
    <property type="project" value="Ensembl"/>
</dbReference>
<dbReference type="GO" id="GO:0071934">
    <property type="term" value="P:thiamine transmembrane transport"/>
    <property type="evidence" value="ECO:0000250"/>
    <property type="project" value="BHF-UCL"/>
</dbReference>
<dbReference type="GO" id="GO:0015888">
    <property type="term" value="P:thiamine transport"/>
    <property type="evidence" value="ECO:0000314"/>
    <property type="project" value="UniProtKB"/>
</dbReference>
<dbReference type="GO" id="GO:0042723">
    <property type="term" value="P:thiamine-containing compound metabolic process"/>
    <property type="evidence" value="ECO:0000304"/>
    <property type="project" value="Reactome"/>
</dbReference>
<dbReference type="GO" id="GO:0055085">
    <property type="term" value="P:transmembrane transport"/>
    <property type="evidence" value="ECO:0000318"/>
    <property type="project" value="GO_Central"/>
</dbReference>
<dbReference type="Gene3D" id="1.20.1250.20">
    <property type="entry name" value="MFS general substrate transporter like domains"/>
    <property type="match status" value="1"/>
</dbReference>
<dbReference type="InterPro" id="IPR002666">
    <property type="entry name" value="Folate_carrier"/>
</dbReference>
<dbReference type="InterPro" id="IPR036259">
    <property type="entry name" value="MFS_trans_sf"/>
</dbReference>
<dbReference type="InterPro" id="IPR028338">
    <property type="entry name" value="ThTr-1"/>
</dbReference>
<dbReference type="PANTHER" id="PTHR10686">
    <property type="entry name" value="FOLATE TRANSPORTER"/>
    <property type="match status" value="1"/>
</dbReference>
<dbReference type="PANTHER" id="PTHR10686:SF19">
    <property type="entry name" value="THIAMINE TRANSPORTER 1"/>
    <property type="match status" value="1"/>
</dbReference>
<dbReference type="Pfam" id="PF01770">
    <property type="entry name" value="Folate_carrier"/>
    <property type="match status" value="1"/>
</dbReference>
<dbReference type="PIRSF" id="PIRSF028739">
    <property type="entry name" value="Folate_carrier"/>
    <property type="match status" value="1"/>
</dbReference>
<dbReference type="PIRSF" id="PIRSF500794">
    <property type="entry name" value="Thiamine_transporter_1"/>
    <property type="match status" value="1"/>
</dbReference>
<dbReference type="SUPFAM" id="SSF103473">
    <property type="entry name" value="MFS general substrate transporter"/>
    <property type="match status" value="1"/>
</dbReference>
<organism>
    <name type="scientific">Homo sapiens</name>
    <name type="common">Human</name>
    <dbReference type="NCBI Taxonomy" id="9606"/>
    <lineage>
        <taxon>Eukaryota</taxon>
        <taxon>Metazoa</taxon>
        <taxon>Chordata</taxon>
        <taxon>Craniata</taxon>
        <taxon>Vertebrata</taxon>
        <taxon>Euteleostomi</taxon>
        <taxon>Mammalia</taxon>
        <taxon>Eutheria</taxon>
        <taxon>Euarchontoglires</taxon>
        <taxon>Primates</taxon>
        <taxon>Haplorrhini</taxon>
        <taxon>Catarrhini</taxon>
        <taxon>Hominidae</taxon>
        <taxon>Homo</taxon>
    </lineage>
</organism>
<accession>O60779</accession>
<accession>B2R9H0</accession>
<accession>B4E1X4</accession>
<accession>Q8WV87</accession>
<accession>Q9UBL7</accession>
<accession>Q9UKJ2</accession>
<accession>Q9UN31</accession>
<accession>Q9UN43</accession>